<feature type="chain" id="PRO_0000462501" description="Lipid droplet coating protein Cap20">
    <location>
        <begin position="1"/>
        <end position="183"/>
    </location>
</feature>
<accession>Q00368</accession>
<proteinExistence type="evidence at transcript level"/>
<comment type="function">
    <text evidence="1 2">Lipid droplet coating protein that regulates lipid metabolism, appressorial turgor pressure, and virulence (PubMed:7756829, Ref.2). Appressorial turgor pressure is important for the mechanical penetration of the host cuticle during infection (Ref.2).</text>
</comment>
<comment type="subcellular location">
    <subcellularLocation>
        <location evidence="2">Lipid droplet</location>
    </subcellularLocation>
    <text evidence="2">Localizes in lipid droplets in both hypha and conidia.</text>
</comment>
<comment type="developmental stage">
    <text evidence="1">Expressed during appressorium formation.</text>
</comment>
<comment type="disruption phenotype">
    <text evidence="1 2">Shows fewer lipid droplet numbers and leads to thinner spores and smaller appressoria (Ref.2). Results also in reduced turgor pressure generation and enlarged appressoria pore size (Ref.2). Drastically decreases virulence on avocado and tomato fruits, as well as on rubber tree leaves (PubMed:7756829, Ref.2).</text>
</comment>
<comment type="similarity">
    <text evidence="4">Belongs to the perilipin family.</text>
</comment>
<organism>
    <name type="scientific">Colletotrichum gloeosporioides</name>
    <name type="common">Anthracnose fungus</name>
    <name type="synonym">Glomerella cingulata</name>
    <dbReference type="NCBI Taxonomy" id="474922"/>
    <lineage>
        <taxon>Eukaryota</taxon>
        <taxon>Fungi</taxon>
        <taxon>Dikarya</taxon>
        <taxon>Ascomycota</taxon>
        <taxon>Pezizomycotina</taxon>
        <taxon>Sordariomycetes</taxon>
        <taxon>Hypocreomycetidae</taxon>
        <taxon>Glomerellales</taxon>
        <taxon>Glomerellaceae</taxon>
        <taxon>Colletotrichum</taxon>
        <taxon>Colletotrichum gloeosporioides species complex</taxon>
    </lineage>
</organism>
<sequence length="183" mass="20078">MSKMAQVNGDLPAVNSATAQHLLDIPVIHDGVVAFRNNPLGKKSIAIGDSAYQTFAAPLLPYLARPWGYLRPYAEKADALGDQTLTKVEERVPVIKKPTEELYAGAKGIIALPIRTGFEAKDHVFKTYAQEKKKVGGENLVTYGKAIVSTTLITTSEIIIWVGDVMHYKKEEAKDIVNEKVNN</sequence>
<reference key="1">
    <citation type="journal article" date="1995" name="Plant Cell">
        <title>Cloning of a gene expressed during appressorium formation by Colletotrichum gloeosporioides and a marked decrease in virulence by disruption of this gene.</title>
        <authorList>
            <person name="Hwang C.S."/>
            <person name="Flaishman M.A."/>
            <person name="Kolattukudy P.E."/>
        </authorList>
    </citation>
    <scope>NUCLEOTIDE SEQUENCE [GENOMIC DNA]</scope>
    <scope>DEVELOPMENTAL STAGE</scope>
    <scope>FUNCTION</scope>
    <scope>DISRUPTION PHENOTYPE</scope>
    <source>
        <tissue>Conidium</tissue>
    </source>
</reference>
<reference key="2">
    <citation type="journal article" date="2018" name="J. Phytopathol.">
        <title>The Colletotrichum gloeosporioides perilipin homologue CAP 20 regulates functional appressorial formation and fungal virulence.</title>
        <authorList>
            <person name="Lin C."/>
            <person name="Liu X."/>
            <person name="Shi T."/>
            <person name="Li C."/>
            <person name="Huang G."/>
        </authorList>
    </citation>
    <scope>FUNCTION</scope>
    <scope>SUBCELLULAR LOCATION</scope>
    <scope>DISRUPTION PHENOTYPE</scope>
</reference>
<gene>
    <name type="primary">Cap20</name>
</gene>
<evidence type="ECO:0000269" key="1">
    <source>
    </source>
</evidence>
<evidence type="ECO:0000269" key="2">
    <source ref="2"/>
</evidence>
<evidence type="ECO:0000303" key="3">
    <source ref="2"/>
</evidence>
<evidence type="ECO:0000305" key="4"/>
<keyword id="KW-0551">Lipid droplet</keyword>
<keyword id="KW-0843">Virulence</keyword>
<dbReference type="EMBL" id="U18061">
    <property type="protein sequence ID" value="AAA77678.1"/>
    <property type="molecule type" value="Genomic_DNA"/>
</dbReference>
<dbReference type="PHI-base" id="PHI:27"/>
<name>CAP20_COLGL</name>
<protein>
    <recommendedName>
        <fullName evidence="3">Lipid droplet coating protein Cap20</fullName>
    </recommendedName>
</protein>